<proteinExistence type="inferred from homology"/>
<name>Y426_BUCBP</name>
<feature type="chain" id="PRO_0000170375" description="Nucleoid-associated protein bbp_426">
    <location>
        <begin position="1"/>
        <end position="110"/>
    </location>
</feature>
<protein>
    <recommendedName>
        <fullName evidence="1">Nucleoid-associated protein bbp_426</fullName>
    </recommendedName>
</protein>
<organism>
    <name type="scientific">Buchnera aphidicola subsp. Baizongia pistaciae (strain Bp)</name>
    <dbReference type="NCBI Taxonomy" id="224915"/>
    <lineage>
        <taxon>Bacteria</taxon>
        <taxon>Pseudomonadati</taxon>
        <taxon>Pseudomonadota</taxon>
        <taxon>Gammaproteobacteria</taxon>
        <taxon>Enterobacterales</taxon>
        <taxon>Erwiniaceae</taxon>
        <taxon>Buchnera</taxon>
    </lineage>
</organism>
<evidence type="ECO:0000255" key="1">
    <source>
        <dbReference type="HAMAP-Rule" id="MF_00274"/>
    </source>
</evidence>
<accession>Q89A94</accession>
<reference key="1">
    <citation type="journal article" date="2003" name="Proc. Natl. Acad. Sci. U.S.A.">
        <title>Reductive genome evolution in Buchnera aphidicola.</title>
        <authorList>
            <person name="van Ham R.C.H.J."/>
            <person name="Kamerbeek J."/>
            <person name="Palacios C."/>
            <person name="Rausell C."/>
            <person name="Abascal F."/>
            <person name="Bastolla U."/>
            <person name="Fernandez J.M."/>
            <person name="Jimenez L."/>
            <person name="Postigo M."/>
            <person name="Silva F.J."/>
            <person name="Tamames J."/>
            <person name="Viguera E."/>
            <person name="Latorre A."/>
            <person name="Valencia A."/>
            <person name="Moran F."/>
            <person name="Moya A."/>
        </authorList>
    </citation>
    <scope>NUCLEOTIDE SEQUENCE [LARGE SCALE GENOMIC DNA]</scope>
    <source>
        <strain>Bp</strain>
    </source>
</reference>
<gene>
    <name type="ordered locus">bbp_426</name>
</gene>
<comment type="function">
    <text evidence="1">Binds to DNA and alters its conformation. May be involved in regulation of gene expression, nucleoid organization and DNA protection.</text>
</comment>
<comment type="subunit">
    <text evidence="1">Homodimer.</text>
</comment>
<comment type="subcellular location">
    <subcellularLocation>
        <location evidence="1">Cytoplasm</location>
        <location evidence="1">Nucleoid</location>
    </subcellularLocation>
</comment>
<comment type="similarity">
    <text evidence="1">Belongs to the YbaB/EbfC family.</text>
</comment>
<keyword id="KW-0963">Cytoplasm</keyword>
<keyword id="KW-0238">DNA-binding</keyword>
<keyword id="KW-1185">Reference proteome</keyword>
<dbReference type="EMBL" id="AE016826">
    <property type="protein sequence ID" value="AAO27136.1"/>
    <property type="molecule type" value="Genomic_DNA"/>
</dbReference>
<dbReference type="RefSeq" id="WP_011091537.1">
    <property type="nucleotide sequence ID" value="NC_004545.1"/>
</dbReference>
<dbReference type="SMR" id="Q89A94"/>
<dbReference type="STRING" id="224915.bbp_426"/>
<dbReference type="KEGG" id="bab:bbp_426"/>
<dbReference type="eggNOG" id="COG0718">
    <property type="taxonomic scope" value="Bacteria"/>
</dbReference>
<dbReference type="HOGENOM" id="CLU_140930_0_0_6"/>
<dbReference type="OrthoDB" id="9808738at2"/>
<dbReference type="Proteomes" id="UP000000601">
    <property type="component" value="Chromosome"/>
</dbReference>
<dbReference type="GO" id="GO:0043590">
    <property type="term" value="C:bacterial nucleoid"/>
    <property type="evidence" value="ECO:0007669"/>
    <property type="project" value="UniProtKB-UniRule"/>
</dbReference>
<dbReference type="GO" id="GO:0005829">
    <property type="term" value="C:cytosol"/>
    <property type="evidence" value="ECO:0007669"/>
    <property type="project" value="TreeGrafter"/>
</dbReference>
<dbReference type="GO" id="GO:0003677">
    <property type="term" value="F:DNA binding"/>
    <property type="evidence" value="ECO:0007669"/>
    <property type="project" value="UniProtKB-UniRule"/>
</dbReference>
<dbReference type="Gene3D" id="3.30.1310.10">
    <property type="entry name" value="Nucleoid-associated protein YbaB-like domain"/>
    <property type="match status" value="1"/>
</dbReference>
<dbReference type="HAMAP" id="MF_00274">
    <property type="entry name" value="DNA_YbaB_EbfC"/>
    <property type="match status" value="1"/>
</dbReference>
<dbReference type="InterPro" id="IPR036894">
    <property type="entry name" value="YbaB-like_sf"/>
</dbReference>
<dbReference type="InterPro" id="IPR004401">
    <property type="entry name" value="YbaB/EbfC"/>
</dbReference>
<dbReference type="NCBIfam" id="TIGR00103">
    <property type="entry name" value="DNA_YbaB_EbfC"/>
    <property type="match status" value="1"/>
</dbReference>
<dbReference type="PANTHER" id="PTHR33449">
    <property type="entry name" value="NUCLEOID-ASSOCIATED PROTEIN YBAB"/>
    <property type="match status" value="1"/>
</dbReference>
<dbReference type="PANTHER" id="PTHR33449:SF1">
    <property type="entry name" value="NUCLEOID-ASSOCIATED PROTEIN YBAB"/>
    <property type="match status" value="1"/>
</dbReference>
<dbReference type="Pfam" id="PF02575">
    <property type="entry name" value="YbaB_DNA_bd"/>
    <property type="match status" value="1"/>
</dbReference>
<dbReference type="PIRSF" id="PIRSF004555">
    <property type="entry name" value="UCP004555"/>
    <property type="match status" value="1"/>
</dbReference>
<dbReference type="SUPFAM" id="SSF82607">
    <property type="entry name" value="YbaB-like"/>
    <property type="match status" value="1"/>
</dbReference>
<sequence length="110" mass="12411">MFSKDGLNNLMQHAQKIQEQMKKIQQEVSEIEVTGESGAGAVKVTLIGSHYCKKIELDKNTILEHDKEILEDLITAAFNDAVRKISDLQKQKMSSISSEMKFSNNLNLPF</sequence>